<proteinExistence type="inferred from homology"/>
<reference key="1">
    <citation type="journal article" date="2000" name="Proc. Natl. Acad. Sci. U.S.A.">
        <title>Archaeal adaptation to higher temperatures revealed by genomic sequence of Thermoplasma volcanium.</title>
        <authorList>
            <person name="Kawashima T."/>
            <person name="Amano N."/>
            <person name="Koike H."/>
            <person name="Makino S."/>
            <person name="Higuchi S."/>
            <person name="Kawashima-Ohya Y."/>
            <person name="Watanabe K."/>
            <person name="Yamazaki M."/>
            <person name="Kanehori K."/>
            <person name="Kawamoto T."/>
            <person name="Nunoshiba T."/>
            <person name="Yamamoto Y."/>
            <person name="Aramaki H."/>
            <person name="Makino K."/>
            <person name="Suzuki M."/>
        </authorList>
    </citation>
    <scope>NUCLEOTIDE SEQUENCE [LARGE SCALE GENOMIC DNA]</scope>
    <source>
        <strain>ATCC 51530 / DSM 4299 / JCM 9571 / NBRC 15438 / GSS1</strain>
    </source>
</reference>
<keyword id="KW-0963">Cytoplasm</keyword>
<keyword id="KW-0324">Glycolysis</keyword>
<keyword id="KW-0520">NAD</keyword>
<keyword id="KW-0521">NADP</keyword>
<keyword id="KW-0560">Oxidoreductase</keyword>
<protein>
    <recommendedName>
        <fullName evidence="2">Glyceraldehyde-3-phosphate dehydrogenase</fullName>
        <shortName evidence="2">GAPDH</shortName>
        <ecNumber evidence="2">1.2.1.59</ecNumber>
    </recommendedName>
    <alternativeName>
        <fullName evidence="2">NAD(P)-dependent glyceraldehyde-3-phosphate dehydrogenase</fullName>
    </alternativeName>
</protein>
<name>G3P_THEVO</name>
<sequence>MIRVGINGYGTIGRRVANAVSSQDDMIVVGIVKTKPDYISEVASRRFKIFVPDSSYMKAFQDAGIKVEGTLDNLLDDAEIIVDATPEGMGEKNKPLYIKKKAKAIFEGGEEPDVAETSFNAYSNYNDAIGKSYVRVVSCNTTGLARTLYPIQQAFGVKHVEATLIRRATDQNDSSKGPINAVEPSLKIPSHHAPDLKTVMGNIDVNTVAIKVPTTLMHVHVVQVDTEKNASNDGVLEAWNNYRRIIHVKKDDGIKSTAQIMDLAREFGRDRSDLYEIAIWEGSVSAKANRISYIQAVHQESDVIPENVDAIRAMFNLADKEKSIEKTDKSLGIEKRVY</sequence>
<dbReference type="EC" id="1.2.1.59" evidence="2"/>
<dbReference type="EMBL" id="BA000011">
    <property type="protein sequence ID" value="BAB59599.1"/>
    <property type="molecule type" value="Genomic_DNA"/>
</dbReference>
<dbReference type="RefSeq" id="WP_010916716.1">
    <property type="nucleotide sequence ID" value="NC_002689.2"/>
</dbReference>
<dbReference type="SMR" id="Q97BJ8"/>
<dbReference type="STRING" id="273116.gene:9381238"/>
<dbReference type="PaxDb" id="273116-14324672"/>
<dbReference type="GeneID" id="1440974"/>
<dbReference type="KEGG" id="tvo:TVG0444310"/>
<dbReference type="eggNOG" id="arCOG00493">
    <property type="taxonomic scope" value="Archaea"/>
</dbReference>
<dbReference type="HOGENOM" id="CLU_069533_0_0_2"/>
<dbReference type="OrthoDB" id="295712at2157"/>
<dbReference type="PhylomeDB" id="Q97BJ8"/>
<dbReference type="UniPathway" id="UPA00109">
    <property type="reaction ID" value="UER00184"/>
</dbReference>
<dbReference type="Proteomes" id="UP000001017">
    <property type="component" value="Chromosome"/>
</dbReference>
<dbReference type="GO" id="GO:0005737">
    <property type="term" value="C:cytoplasm"/>
    <property type="evidence" value="ECO:0007669"/>
    <property type="project" value="UniProtKB-SubCell"/>
</dbReference>
<dbReference type="GO" id="GO:0008839">
    <property type="term" value="F:4-hydroxy-tetrahydrodipicolinate reductase"/>
    <property type="evidence" value="ECO:0007669"/>
    <property type="project" value="InterPro"/>
</dbReference>
<dbReference type="GO" id="GO:0004365">
    <property type="term" value="F:glyceraldehyde-3-phosphate dehydrogenase (NAD+) (phosphorylating) activity"/>
    <property type="evidence" value="ECO:0007669"/>
    <property type="project" value="UniProtKB-UniRule"/>
</dbReference>
<dbReference type="GO" id="GO:0047100">
    <property type="term" value="F:glyceraldehyde-3-phosphate dehydrogenase (NADP+) (phosphorylating) activity"/>
    <property type="evidence" value="ECO:0007669"/>
    <property type="project" value="RHEA"/>
</dbReference>
<dbReference type="GO" id="GO:0051287">
    <property type="term" value="F:NAD binding"/>
    <property type="evidence" value="ECO:0007669"/>
    <property type="project" value="InterPro"/>
</dbReference>
<dbReference type="GO" id="GO:0050661">
    <property type="term" value="F:NADP binding"/>
    <property type="evidence" value="ECO:0007669"/>
    <property type="project" value="InterPro"/>
</dbReference>
<dbReference type="GO" id="GO:0006096">
    <property type="term" value="P:glycolytic process"/>
    <property type="evidence" value="ECO:0007669"/>
    <property type="project" value="UniProtKB-UniRule"/>
</dbReference>
<dbReference type="GO" id="GO:0009089">
    <property type="term" value="P:lysine biosynthetic process via diaminopimelate"/>
    <property type="evidence" value="ECO:0007669"/>
    <property type="project" value="InterPro"/>
</dbReference>
<dbReference type="CDD" id="cd18127">
    <property type="entry name" value="GAPDH_II_C"/>
    <property type="match status" value="1"/>
</dbReference>
<dbReference type="CDD" id="cd02278">
    <property type="entry name" value="GAPDH_II_N"/>
    <property type="match status" value="1"/>
</dbReference>
<dbReference type="Gene3D" id="3.30.360.10">
    <property type="entry name" value="Dihydrodipicolinate Reductase, domain 2"/>
    <property type="match status" value="1"/>
</dbReference>
<dbReference type="Gene3D" id="3.40.50.720">
    <property type="entry name" value="NAD(P)-binding Rossmann-like Domain"/>
    <property type="match status" value="1"/>
</dbReference>
<dbReference type="HAMAP" id="MF_00559">
    <property type="entry name" value="G3P_dehdrog_arch"/>
    <property type="match status" value="1"/>
</dbReference>
<dbReference type="InterPro" id="IPR000846">
    <property type="entry name" value="DapB_N"/>
</dbReference>
<dbReference type="InterPro" id="IPR020831">
    <property type="entry name" value="GlycerAld/Erythrose_P_DH"/>
</dbReference>
<dbReference type="InterPro" id="IPR020830">
    <property type="entry name" value="GlycerAld_3-P_DH_AS"/>
</dbReference>
<dbReference type="InterPro" id="IPR020829">
    <property type="entry name" value="GlycerAld_3-P_DH_cat"/>
</dbReference>
<dbReference type="InterPro" id="IPR020828">
    <property type="entry name" value="GlycerAld_3-P_DH_NAD(P)-bd"/>
</dbReference>
<dbReference type="InterPro" id="IPR006436">
    <property type="entry name" value="Glyceraldehyde-3-P_DH_2_arc"/>
</dbReference>
<dbReference type="InterPro" id="IPR036291">
    <property type="entry name" value="NAD(P)-bd_dom_sf"/>
</dbReference>
<dbReference type="NCBIfam" id="TIGR01546">
    <property type="entry name" value="GAPDH-II_archae"/>
    <property type="match status" value="1"/>
</dbReference>
<dbReference type="NCBIfam" id="NF003251">
    <property type="entry name" value="PRK04207.1"/>
    <property type="match status" value="1"/>
</dbReference>
<dbReference type="Pfam" id="PF01113">
    <property type="entry name" value="DapB_N"/>
    <property type="match status" value="1"/>
</dbReference>
<dbReference type="Pfam" id="PF02800">
    <property type="entry name" value="Gp_dh_C"/>
    <property type="match status" value="1"/>
</dbReference>
<dbReference type="PIRSF" id="PIRSF000149">
    <property type="entry name" value="GAP_DH"/>
    <property type="match status" value="1"/>
</dbReference>
<dbReference type="SMART" id="SM00846">
    <property type="entry name" value="Gp_dh_N"/>
    <property type="match status" value="1"/>
</dbReference>
<dbReference type="SUPFAM" id="SSF55347">
    <property type="entry name" value="Glyceraldehyde-3-phosphate dehydrogenase-like, C-terminal domain"/>
    <property type="match status" value="1"/>
</dbReference>
<dbReference type="SUPFAM" id="SSF51735">
    <property type="entry name" value="NAD(P)-binding Rossmann-fold domains"/>
    <property type="match status" value="1"/>
</dbReference>
<dbReference type="PROSITE" id="PS00071">
    <property type="entry name" value="GAPDH"/>
    <property type="match status" value="1"/>
</dbReference>
<evidence type="ECO:0000250" key="1"/>
<evidence type="ECO:0000255" key="2">
    <source>
        <dbReference type="HAMAP-Rule" id="MF_00559"/>
    </source>
</evidence>
<comment type="catalytic activity">
    <reaction evidence="2">
        <text>D-glyceraldehyde 3-phosphate + phosphate + NADP(+) = (2R)-3-phospho-glyceroyl phosphate + NADPH + H(+)</text>
        <dbReference type="Rhea" id="RHEA:10296"/>
        <dbReference type="ChEBI" id="CHEBI:15378"/>
        <dbReference type="ChEBI" id="CHEBI:43474"/>
        <dbReference type="ChEBI" id="CHEBI:57604"/>
        <dbReference type="ChEBI" id="CHEBI:57783"/>
        <dbReference type="ChEBI" id="CHEBI:58349"/>
        <dbReference type="ChEBI" id="CHEBI:59776"/>
        <dbReference type="EC" id="1.2.1.59"/>
    </reaction>
</comment>
<comment type="catalytic activity">
    <reaction evidence="2">
        <text>D-glyceraldehyde 3-phosphate + phosphate + NAD(+) = (2R)-3-phospho-glyceroyl phosphate + NADH + H(+)</text>
        <dbReference type="Rhea" id="RHEA:10300"/>
        <dbReference type="ChEBI" id="CHEBI:15378"/>
        <dbReference type="ChEBI" id="CHEBI:43474"/>
        <dbReference type="ChEBI" id="CHEBI:57540"/>
        <dbReference type="ChEBI" id="CHEBI:57604"/>
        <dbReference type="ChEBI" id="CHEBI:57945"/>
        <dbReference type="ChEBI" id="CHEBI:59776"/>
        <dbReference type="EC" id="1.2.1.59"/>
    </reaction>
</comment>
<comment type="pathway">
    <text evidence="2">Carbohydrate degradation; glycolysis; pyruvate from D-glyceraldehyde 3-phosphate: step 1/5.</text>
</comment>
<comment type="subunit">
    <text evidence="2">Homotetramer.</text>
</comment>
<comment type="subcellular location">
    <subcellularLocation>
        <location evidence="2">Cytoplasm</location>
    </subcellularLocation>
</comment>
<comment type="similarity">
    <text evidence="2">Belongs to the glyceraldehyde-3-phosphate dehydrogenase family.</text>
</comment>
<accession>Q97BJ8</accession>
<organism>
    <name type="scientific">Thermoplasma volcanium (strain ATCC 51530 / DSM 4299 / JCM 9571 / NBRC 15438 / GSS1)</name>
    <dbReference type="NCBI Taxonomy" id="273116"/>
    <lineage>
        <taxon>Archaea</taxon>
        <taxon>Methanobacteriati</taxon>
        <taxon>Thermoplasmatota</taxon>
        <taxon>Thermoplasmata</taxon>
        <taxon>Thermoplasmatales</taxon>
        <taxon>Thermoplasmataceae</taxon>
        <taxon>Thermoplasma</taxon>
    </lineage>
</organism>
<gene>
    <name evidence="2" type="primary">gap</name>
    <name type="ordered locus">TV0457</name>
    <name type="ORF">TVG0444310</name>
</gene>
<feature type="chain" id="PRO_0000145738" description="Glyceraldehyde-3-phosphate dehydrogenase">
    <location>
        <begin position="1"/>
        <end position="338"/>
    </location>
</feature>
<feature type="active site" description="Nucleophile" evidence="2">
    <location>
        <position position="139"/>
    </location>
</feature>
<feature type="binding site" evidence="2">
    <location>
        <begin position="11"/>
        <end position="12"/>
    </location>
    <ligand>
        <name>NAD(+)</name>
        <dbReference type="ChEBI" id="CHEBI:57540"/>
    </ligand>
</feature>
<feature type="binding site" evidence="2">
    <location>
        <position position="109"/>
    </location>
    <ligand>
        <name>NAD(+)</name>
        <dbReference type="ChEBI" id="CHEBI:57540"/>
    </ligand>
</feature>
<feature type="binding site" evidence="2">
    <location>
        <begin position="138"/>
        <end position="140"/>
    </location>
    <ligand>
        <name>D-glyceraldehyde 3-phosphate</name>
        <dbReference type="ChEBI" id="CHEBI:59776"/>
    </ligand>
</feature>
<feature type="binding site" evidence="2">
    <location>
        <position position="167"/>
    </location>
    <ligand>
        <name>NAD(+)</name>
        <dbReference type="ChEBI" id="CHEBI:57540"/>
    </ligand>
</feature>
<feature type="binding site" evidence="1">
    <location>
        <position position="169"/>
    </location>
    <ligand>
        <name>D-glyceraldehyde 3-phosphate</name>
        <dbReference type="ChEBI" id="CHEBI:59776"/>
    </ligand>
</feature>
<feature type="binding site" evidence="2">
    <location>
        <begin position="192"/>
        <end position="193"/>
    </location>
    <ligand>
        <name>D-glyceraldehyde 3-phosphate</name>
        <dbReference type="ChEBI" id="CHEBI:59776"/>
    </ligand>
</feature>
<feature type="binding site" evidence="2">
    <location>
        <position position="299"/>
    </location>
    <ligand>
        <name>NAD(+)</name>
        <dbReference type="ChEBI" id="CHEBI:57540"/>
    </ligand>
</feature>